<organism>
    <name type="scientific">Homo sapiens</name>
    <name type="common">Human</name>
    <dbReference type="NCBI Taxonomy" id="9606"/>
    <lineage>
        <taxon>Eukaryota</taxon>
        <taxon>Metazoa</taxon>
        <taxon>Chordata</taxon>
        <taxon>Craniata</taxon>
        <taxon>Vertebrata</taxon>
        <taxon>Euteleostomi</taxon>
        <taxon>Mammalia</taxon>
        <taxon>Eutheria</taxon>
        <taxon>Euarchontoglires</taxon>
        <taxon>Primates</taxon>
        <taxon>Haplorrhini</taxon>
        <taxon>Catarrhini</taxon>
        <taxon>Hominidae</taxon>
        <taxon>Homo</taxon>
    </lineage>
</organism>
<comment type="function">
    <text evidence="1">Inhibits signal transduction by increasing the GTPase activity of G protein alpha subunits thereby driving them into their inactive GDP-bound form.</text>
</comment>
<comment type="tissue specificity">
    <text evidence="3">Expressed ubiquitously.</text>
</comment>
<gene>
    <name type="primary">RGS21</name>
</gene>
<accession>Q2M5E4</accession>
<sequence>MPVKCCFYRSPTAETMTWSENMDTLLANQAGLDAFRIFLKSEFSEENVEFWLACEDFKKTKNADKIASKAKMIYSEFIEADAPKEINIDFGTRDLISKNIAEPTLKCFDEAQKLIYCLMAKDSFPRFLKSEIYKKLVNSQQVPNHKKWLPFL</sequence>
<name>RGS21_HUMAN</name>
<dbReference type="EMBL" id="AY643711">
    <property type="protein sequence ID" value="AAT64913.1"/>
    <property type="molecule type" value="mRNA"/>
</dbReference>
<dbReference type="CCDS" id="CCDS41448.1"/>
<dbReference type="RefSeq" id="NP_001034241.1">
    <property type="nucleotide sequence ID" value="NM_001039152.3"/>
</dbReference>
<dbReference type="SMR" id="Q2M5E4"/>
<dbReference type="FunCoup" id="Q2M5E4">
    <property type="interactions" value="321"/>
</dbReference>
<dbReference type="STRING" id="9606.ENSP00000428343"/>
<dbReference type="iPTMnet" id="Q2M5E4"/>
<dbReference type="PhosphoSitePlus" id="Q2M5E4"/>
<dbReference type="BioMuta" id="RGS21"/>
<dbReference type="DMDM" id="121941516"/>
<dbReference type="MassIVE" id="Q2M5E4"/>
<dbReference type="PaxDb" id="9606-ENSP00000428343"/>
<dbReference type="PeptideAtlas" id="Q2M5E4"/>
<dbReference type="Antibodypedia" id="58786">
    <property type="antibodies" value="66 antibodies from 23 providers"/>
</dbReference>
<dbReference type="DNASU" id="431704"/>
<dbReference type="Ensembl" id="ENST00000417209.2">
    <property type="protein sequence ID" value="ENSP00000428343.1"/>
    <property type="gene ID" value="ENSG00000253148.1"/>
</dbReference>
<dbReference type="GeneID" id="431704"/>
<dbReference type="KEGG" id="hsa:431704"/>
<dbReference type="MANE-Select" id="ENST00000417209.2">
    <property type="protein sequence ID" value="ENSP00000428343.1"/>
    <property type="RefSeq nucleotide sequence ID" value="NM_001039152.3"/>
    <property type="RefSeq protein sequence ID" value="NP_001034241.1"/>
</dbReference>
<dbReference type="UCSC" id="uc001gsh.4">
    <property type="organism name" value="human"/>
</dbReference>
<dbReference type="AGR" id="HGNC:26839"/>
<dbReference type="CTD" id="431704"/>
<dbReference type="DisGeNET" id="431704"/>
<dbReference type="GeneCards" id="RGS21"/>
<dbReference type="HGNC" id="HGNC:26839">
    <property type="gene designation" value="RGS21"/>
</dbReference>
<dbReference type="HPA" id="ENSG00000253148">
    <property type="expression patterns" value="Not detected"/>
</dbReference>
<dbReference type="MIM" id="612407">
    <property type="type" value="gene"/>
</dbReference>
<dbReference type="neXtProt" id="NX_Q2M5E4"/>
<dbReference type="OpenTargets" id="ENSG00000253148"/>
<dbReference type="PharmGKB" id="PA134875582"/>
<dbReference type="VEuPathDB" id="HostDB:ENSG00000253148"/>
<dbReference type="eggNOG" id="KOG3589">
    <property type="taxonomic scope" value="Eukaryota"/>
</dbReference>
<dbReference type="GeneTree" id="ENSGT00940000161004"/>
<dbReference type="HOGENOM" id="CLU_059863_1_5_1"/>
<dbReference type="InParanoid" id="Q2M5E4"/>
<dbReference type="OMA" id="RCCFHRS"/>
<dbReference type="OrthoDB" id="196547at2759"/>
<dbReference type="PAN-GO" id="Q2M5E4">
    <property type="GO annotations" value="0 GO annotations based on evolutionary models"/>
</dbReference>
<dbReference type="PhylomeDB" id="Q2M5E4"/>
<dbReference type="TreeFam" id="TF315837"/>
<dbReference type="PathwayCommons" id="Q2M5E4"/>
<dbReference type="Reactome" id="R-HSA-416476">
    <property type="pathway name" value="G alpha (q) signalling events"/>
</dbReference>
<dbReference type="Reactome" id="R-HSA-418594">
    <property type="pathway name" value="G alpha (i) signalling events"/>
</dbReference>
<dbReference type="SignaLink" id="Q2M5E4"/>
<dbReference type="BioGRID-ORCS" id="431704">
    <property type="hits" value="13 hits in 1133 CRISPR screens"/>
</dbReference>
<dbReference type="GenomeRNAi" id="431704"/>
<dbReference type="Pharos" id="Q2M5E4">
    <property type="development level" value="Tbio"/>
</dbReference>
<dbReference type="PRO" id="PR:Q2M5E4"/>
<dbReference type="Proteomes" id="UP000005640">
    <property type="component" value="Chromosome 1"/>
</dbReference>
<dbReference type="RNAct" id="Q2M5E4">
    <property type="molecule type" value="protein"/>
</dbReference>
<dbReference type="Bgee" id="ENSG00000253148">
    <property type="expression patterns" value="Expressed in ganglionic eminence"/>
</dbReference>
<dbReference type="GO" id="GO:0005886">
    <property type="term" value="C:plasma membrane"/>
    <property type="evidence" value="ECO:0000304"/>
    <property type="project" value="Reactome"/>
</dbReference>
<dbReference type="GO" id="GO:0003924">
    <property type="term" value="F:GTPase activity"/>
    <property type="evidence" value="ECO:0000304"/>
    <property type="project" value="Reactome"/>
</dbReference>
<dbReference type="GO" id="GO:0007186">
    <property type="term" value="P:G protein-coupled receptor signaling pathway"/>
    <property type="evidence" value="ECO:0000304"/>
    <property type="project" value="Reactome"/>
</dbReference>
<dbReference type="GO" id="GO:0009968">
    <property type="term" value="P:negative regulation of signal transduction"/>
    <property type="evidence" value="ECO:0007669"/>
    <property type="project" value="UniProtKB-KW"/>
</dbReference>
<dbReference type="GO" id="GO:0050913">
    <property type="term" value="P:sensory perception of bitter taste"/>
    <property type="evidence" value="ECO:0007669"/>
    <property type="project" value="Ensembl"/>
</dbReference>
<dbReference type="GO" id="GO:0050916">
    <property type="term" value="P:sensory perception of sweet taste"/>
    <property type="evidence" value="ECO:0007669"/>
    <property type="project" value="Ensembl"/>
</dbReference>
<dbReference type="GO" id="GO:0050917">
    <property type="term" value="P:sensory perception of umami taste"/>
    <property type="evidence" value="ECO:0007669"/>
    <property type="project" value="Ensembl"/>
</dbReference>
<dbReference type="GO" id="GO:0019226">
    <property type="term" value="P:transmission of nerve impulse"/>
    <property type="evidence" value="ECO:0007669"/>
    <property type="project" value="Ensembl"/>
</dbReference>
<dbReference type="CDD" id="cd08723">
    <property type="entry name" value="RGS_RGS21"/>
    <property type="match status" value="1"/>
</dbReference>
<dbReference type="FunFam" id="1.10.167.10:FF:000001">
    <property type="entry name" value="Putative regulator of g-protein signaling 12"/>
    <property type="match status" value="1"/>
</dbReference>
<dbReference type="Gene3D" id="1.10.196.10">
    <property type="match status" value="1"/>
</dbReference>
<dbReference type="Gene3D" id="1.10.167.10">
    <property type="entry name" value="Regulator of G-protein Signalling 4, domain 2"/>
    <property type="match status" value="1"/>
</dbReference>
<dbReference type="InterPro" id="IPR016137">
    <property type="entry name" value="RGS"/>
</dbReference>
<dbReference type="InterPro" id="IPR036305">
    <property type="entry name" value="RGS_sf"/>
</dbReference>
<dbReference type="InterPro" id="IPR024066">
    <property type="entry name" value="RGS_subdom1/3"/>
</dbReference>
<dbReference type="InterPro" id="IPR044926">
    <property type="entry name" value="RGS_subdomain_2"/>
</dbReference>
<dbReference type="PANTHER" id="PTHR10845">
    <property type="entry name" value="REGULATOR OF G PROTEIN SIGNALING"/>
    <property type="match status" value="1"/>
</dbReference>
<dbReference type="PANTHER" id="PTHR10845:SF160">
    <property type="entry name" value="REGULATOR OF G-PROTEIN SIGNALING 21"/>
    <property type="match status" value="1"/>
</dbReference>
<dbReference type="Pfam" id="PF00615">
    <property type="entry name" value="RGS"/>
    <property type="match status" value="1"/>
</dbReference>
<dbReference type="PRINTS" id="PR01301">
    <property type="entry name" value="RGSPROTEIN"/>
</dbReference>
<dbReference type="SMART" id="SM00315">
    <property type="entry name" value="RGS"/>
    <property type="match status" value="1"/>
</dbReference>
<dbReference type="SUPFAM" id="SSF48097">
    <property type="entry name" value="Regulator of G-protein signaling, RGS"/>
    <property type="match status" value="1"/>
</dbReference>
<dbReference type="PROSITE" id="PS50132">
    <property type="entry name" value="RGS"/>
    <property type="match status" value="1"/>
</dbReference>
<protein>
    <recommendedName>
        <fullName>Regulator of G-protein signaling 21</fullName>
        <shortName>RGS21</shortName>
    </recommendedName>
</protein>
<evidence type="ECO:0000250" key="1"/>
<evidence type="ECO:0000255" key="2">
    <source>
        <dbReference type="PROSITE-ProRule" id="PRU00171"/>
    </source>
</evidence>
<evidence type="ECO:0000269" key="3">
    <source>
    </source>
</evidence>
<keyword id="KW-1185">Reference proteome</keyword>
<keyword id="KW-0734">Signal transduction inhibitor</keyword>
<proteinExistence type="evidence at transcript level"/>
<feature type="chain" id="PRO_0000271375" description="Regulator of G-protein signaling 21">
    <location>
        <begin position="1"/>
        <end position="152"/>
    </location>
</feature>
<feature type="domain" description="RGS" evidence="2">
    <location>
        <begin position="21"/>
        <end position="137"/>
    </location>
</feature>
<reference key="1">
    <citation type="journal article" date="2005" name="Acta Biochim. Pol.">
        <title>Isolation and expression pattern of RGS21 gene, a novel RGS member.</title>
        <authorList>
            <person name="Li X."/>
            <person name="Chen L."/>
            <person name="Ji C."/>
            <person name="Liu B."/>
            <person name="Gu J."/>
            <person name="Xu J."/>
            <person name="Zou X."/>
            <person name="Gu S."/>
            <person name="Mao Y."/>
        </authorList>
    </citation>
    <scope>NUCLEOTIDE SEQUENCE [MRNA]</scope>
    <scope>TISSUE SPECIFICITY</scope>
    <source>
        <tissue>Fetal brain</tissue>
    </source>
</reference>